<organism>
    <name type="scientific">Schizosaccharomyces pombe (strain 972 / ATCC 24843)</name>
    <name type="common">Fission yeast</name>
    <dbReference type="NCBI Taxonomy" id="284812"/>
    <lineage>
        <taxon>Eukaryota</taxon>
        <taxon>Fungi</taxon>
        <taxon>Dikarya</taxon>
        <taxon>Ascomycota</taxon>
        <taxon>Taphrinomycotina</taxon>
        <taxon>Schizosaccharomycetes</taxon>
        <taxon>Schizosaccharomycetales</taxon>
        <taxon>Schizosaccharomycetaceae</taxon>
        <taxon>Schizosaccharomyces</taxon>
    </lineage>
</organism>
<comment type="function">
    <text evidence="1">Component of the mitochondrial ribosome (mitoribosome), a dedicated translation machinery responsible for the synthesis of mitochondrial genome-encoded proteins, including at least some of the essential transmembrane subunits of the mitochondrial respiratory chain. The mitoribosomes are attached to the mitochondrial inner membrane and translation products are cotranslationally integrated into the membrane.</text>
</comment>
<comment type="subunit">
    <text evidence="1">Component of the mitochondrial small ribosomal subunit (mt-SSU). Mature yeast 74S mitochondrial ribosomes consist of a small (37S) and a large (54S) subunit. The 37S small subunit contains a 15S ribosomal RNA (15S mt-rRNA) and at least 32 different proteins. The 54S large subunit contains a 21S rRNA (21S mt-rRNA) and at least 45 different proteins. mS43 forms a dimer with mS42, building a large protuberance adjacent to the mRNA channel exit in the mt-SSU body.</text>
</comment>
<comment type="subcellular location">
    <subcellularLocation>
        <location evidence="1">Mitochondrion</location>
    </subcellularLocation>
</comment>
<comment type="similarity">
    <text evidence="2">Belongs to the mitochondrion-specific ribosomal protein mS42 family.</text>
</comment>
<sequence>MSFQQRFARALDVGYKNFLSKDAVRNIFAYDNHLRGLVQKECKIHQTPYRVPSDLMVQSASDPARANLFNYSSQLVNHDFFFSGLISPERPSADADLGAINLKPGIDASFGSFGELKSQMVDVGNSVFGDGWLWLVYSPEKSLFSLLCTYNASNAFLWGTGFPKFRTNAIVPLLCVNLWQYAYLDDYGLNGKKMYITKWWDMINWTVVNNRFQATRIESL</sequence>
<accession>O74379</accession>
<protein>
    <recommendedName>
        <fullName evidence="2">Small ribosomal subunit protein mS42</fullName>
    </recommendedName>
    <alternativeName>
        <fullName>37S ribosomal protein S26B, mitochondrial</fullName>
    </alternativeName>
</protein>
<proteinExistence type="inferred from homology"/>
<keyword id="KW-0496">Mitochondrion</keyword>
<keyword id="KW-1185">Reference proteome</keyword>
<keyword id="KW-0687">Ribonucleoprotein</keyword>
<keyword id="KW-0689">Ribosomal protein</keyword>
<gene>
    <name type="ORF">SPBC3H7.04</name>
</gene>
<evidence type="ECO:0000250" key="1">
    <source>
        <dbReference type="UniProtKB" id="P10662"/>
    </source>
</evidence>
<evidence type="ECO:0000305" key="2"/>
<reference key="1">
    <citation type="journal article" date="2002" name="Nature">
        <title>The genome sequence of Schizosaccharomyces pombe.</title>
        <authorList>
            <person name="Wood V."/>
            <person name="Gwilliam R."/>
            <person name="Rajandream M.A."/>
            <person name="Lyne M.H."/>
            <person name="Lyne R."/>
            <person name="Stewart A."/>
            <person name="Sgouros J.G."/>
            <person name="Peat N."/>
            <person name="Hayles J."/>
            <person name="Baker S.G."/>
            <person name="Basham D."/>
            <person name="Bowman S."/>
            <person name="Brooks K."/>
            <person name="Brown D."/>
            <person name="Brown S."/>
            <person name="Chillingworth T."/>
            <person name="Churcher C.M."/>
            <person name="Collins M."/>
            <person name="Connor R."/>
            <person name="Cronin A."/>
            <person name="Davis P."/>
            <person name="Feltwell T."/>
            <person name="Fraser A."/>
            <person name="Gentles S."/>
            <person name="Goble A."/>
            <person name="Hamlin N."/>
            <person name="Harris D.E."/>
            <person name="Hidalgo J."/>
            <person name="Hodgson G."/>
            <person name="Holroyd S."/>
            <person name="Hornsby T."/>
            <person name="Howarth S."/>
            <person name="Huckle E.J."/>
            <person name="Hunt S."/>
            <person name="Jagels K."/>
            <person name="James K.D."/>
            <person name="Jones L."/>
            <person name="Jones M."/>
            <person name="Leather S."/>
            <person name="McDonald S."/>
            <person name="McLean J."/>
            <person name="Mooney P."/>
            <person name="Moule S."/>
            <person name="Mungall K.L."/>
            <person name="Murphy L.D."/>
            <person name="Niblett D."/>
            <person name="Odell C."/>
            <person name="Oliver K."/>
            <person name="O'Neil S."/>
            <person name="Pearson D."/>
            <person name="Quail M.A."/>
            <person name="Rabbinowitsch E."/>
            <person name="Rutherford K.M."/>
            <person name="Rutter S."/>
            <person name="Saunders D."/>
            <person name="Seeger K."/>
            <person name="Sharp S."/>
            <person name="Skelton J."/>
            <person name="Simmonds M.N."/>
            <person name="Squares R."/>
            <person name="Squares S."/>
            <person name="Stevens K."/>
            <person name="Taylor K."/>
            <person name="Taylor R.G."/>
            <person name="Tivey A."/>
            <person name="Walsh S.V."/>
            <person name="Warren T."/>
            <person name="Whitehead S."/>
            <person name="Woodward J.R."/>
            <person name="Volckaert G."/>
            <person name="Aert R."/>
            <person name="Robben J."/>
            <person name="Grymonprez B."/>
            <person name="Weltjens I."/>
            <person name="Vanstreels E."/>
            <person name="Rieger M."/>
            <person name="Schaefer M."/>
            <person name="Mueller-Auer S."/>
            <person name="Gabel C."/>
            <person name="Fuchs M."/>
            <person name="Duesterhoeft A."/>
            <person name="Fritzc C."/>
            <person name="Holzer E."/>
            <person name="Moestl D."/>
            <person name="Hilbert H."/>
            <person name="Borzym K."/>
            <person name="Langer I."/>
            <person name="Beck A."/>
            <person name="Lehrach H."/>
            <person name="Reinhardt R."/>
            <person name="Pohl T.M."/>
            <person name="Eger P."/>
            <person name="Zimmermann W."/>
            <person name="Wedler H."/>
            <person name="Wambutt R."/>
            <person name="Purnelle B."/>
            <person name="Goffeau A."/>
            <person name="Cadieu E."/>
            <person name="Dreano S."/>
            <person name="Gloux S."/>
            <person name="Lelaure V."/>
            <person name="Mottier S."/>
            <person name="Galibert F."/>
            <person name="Aves S.J."/>
            <person name="Xiang Z."/>
            <person name="Hunt C."/>
            <person name="Moore K."/>
            <person name="Hurst S.M."/>
            <person name="Lucas M."/>
            <person name="Rochet M."/>
            <person name="Gaillardin C."/>
            <person name="Tallada V.A."/>
            <person name="Garzon A."/>
            <person name="Thode G."/>
            <person name="Daga R.R."/>
            <person name="Cruzado L."/>
            <person name="Jimenez J."/>
            <person name="Sanchez M."/>
            <person name="del Rey F."/>
            <person name="Benito J."/>
            <person name="Dominguez A."/>
            <person name="Revuelta J.L."/>
            <person name="Moreno S."/>
            <person name="Armstrong J."/>
            <person name="Forsburg S.L."/>
            <person name="Cerutti L."/>
            <person name="Lowe T."/>
            <person name="McCombie W.R."/>
            <person name="Paulsen I."/>
            <person name="Potashkin J."/>
            <person name="Shpakovski G.V."/>
            <person name="Ussery D."/>
            <person name="Barrell B.G."/>
            <person name="Nurse P."/>
        </authorList>
    </citation>
    <scope>NUCLEOTIDE SEQUENCE [LARGE SCALE GENOMIC DNA]</scope>
    <source>
        <strain>972 / ATCC 24843</strain>
    </source>
</reference>
<dbReference type="EMBL" id="CU329671">
    <property type="protein sequence ID" value="CAA20300.1"/>
    <property type="molecule type" value="Genomic_DNA"/>
</dbReference>
<dbReference type="PIR" id="T40411">
    <property type="entry name" value="T40411"/>
</dbReference>
<dbReference type="RefSeq" id="NP_595771.1">
    <property type="nucleotide sequence ID" value="NM_001021672.2"/>
</dbReference>
<dbReference type="SMR" id="O74379"/>
<dbReference type="ComplexPortal" id="CPX-10315">
    <property type="entry name" value="37S mitochondrial small ribosomal subunit"/>
</dbReference>
<dbReference type="FunCoup" id="O74379">
    <property type="interactions" value="1"/>
</dbReference>
<dbReference type="STRING" id="284812.O74379"/>
<dbReference type="PaxDb" id="4896-SPBC3H7.04.1"/>
<dbReference type="EnsemblFungi" id="SPBC3H7.04.1">
    <property type="protein sequence ID" value="SPBC3H7.04.1:pep"/>
    <property type="gene ID" value="SPBC3H7.04"/>
</dbReference>
<dbReference type="KEGG" id="spo:2540925"/>
<dbReference type="PomBase" id="SPBC3H7.04"/>
<dbReference type="VEuPathDB" id="FungiDB:SPBC3H7.04"/>
<dbReference type="eggNOG" id="KOG0876">
    <property type="taxonomic scope" value="Eukaryota"/>
</dbReference>
<dbReference type="HOGENOM" id="CLU_1240756_0_0_1"/>
<dbReference type="InParanoid" id="O74379"/>
<dbReference type="OMA" id="CTYNASN"/>
<dbReference type="PhylomeDB" id="O74379"/>
<dbReference type="PRO" id="PR:O74379"/>
<dbReference type="Proteomes" id="UP000002485">
    <property type="component" value="Chromosome II"/>
</dbReference>
<dbReference type="GO" id="GO:0005737">
    <property type="term" value="C:cytoplasm"/>
    <property type="evidence" value="ECO:0007005"/>
    <property type="project" value="PomBase"/>
</dbReference>
<dbReference type="GO" id="GO:0005829">
    <property type="term" value="C:cytosol"/>
    <property type="evidence" value="ECO:0007005"/>
    <property type="project" value="PomBase"/>
</dbReference>
<dbReference type="GO" id="GO:0005763">
    <property type="term" value="C:mitochondrial small ribosomal subunit"/>
    <property type="evidence" value="ECO:0000266"/>
    <property type="project" value="PomBase"/>
</dbReference>
<dbReference type="GO" id="GO:0005634">
    <property type="term" value="C:nucleus"/>
    <property type="evidence" value="ECO:0007005"/>
    <property type="project" value="PomBase"/>
</dbReference>
<dbReference type="GO" id="GO:0046872">
    <property type="term" value="F:metal ion binding"/>
    <property type="evidence" value="ECO:0007669"/>
    <property type="project" value="InterPro"/>
</dbReference>
<dbReference type="GO" id="GO:0003735">
    <property type="term" value="F:structural constituent of ribosome"/>
    <property type="evidence" value="ECO:0000266"/>
    <property type="project" value="PomBase"/>
</dbReference>
<dbReference type="GO" id="GO:0004784">
    <property type="term" value="F:superoxide dismutase activity"/>
    <property type="evidence" value="ECO:0000255"/>
    <property type="project" value="PomBase"/>
</dbReference>
<dbReference type="GO" id="GO:0032543">
    <property type="term" value="P:mitochondrial translation"/>
    <property type="evidence" value="ECO:0000266"/>
    <property type="project" value="PomBase"/>
</dbReference>
<dbReference type="GO" id="GO:0019430">
    <property type="term" value="P:removal of superoxide radicals"/>
    <property type="evidence" value="ECO:0000255"/>
    <property type="project" value="PomBase"/>
</dbReference>
<dbReference type="FunFam" id="3.55.40.20:FF:000009">
    <property type="entry name" value="Mitochondrial ribosomal small subunit component"/>
    <property type="match status" value="1"/>
</dbReference>
<dbReference type="Gene3D" id="3.55.40.20">
    <property type="entry name" value="Iron/manganese superoxide dismutase, C-terminal domain"/>
    <property type="match status" value="1"/>
</dbReference>
<dbReference type="InterPro" id="IPR019832">
    <property type="entry name" value="Mn/Fe_SOD_C"/>
</dbReference>
<dbReference type="InterPro" id="IPR036324">
    <property type="entry name" value="Mn/Fe_SOD_N_sf"/>
</dbReference>
<dbReference type="InterPro" id="IPR036314">
    <property type="entry name" value="SOD_C_sf"/>
</dbReference>
<dbReference type="PANTHER" id="PTHR43595">
    <property type="entry name" value="37S RIBOSOMAL PROTEIN S26, MITOCHONDRIAL"/>
    <property type="match status" value="1"/>
</dbReference>
<dbReference type="PANTHER" id="PTHR43595:SF2">
    <property type="entry name" value="SMALL RIBOSOMAL SUBUNIT PROTEIN MS42"/>
    <property type="match status" value="1"/>
</dbReference>
<dbReference type="Pfam" id="PF02777">
    <property type="entry name" value="Sod_Fe_C"/>
    <property type="match status" value="1"/>
</dbReference>
<dbReference type="SUPFAM" id="SSF54719">
    <property type="entry name" value="Fe,Mn superoxide dismutase (SOD), C-terminal domain"/>
    <property type="match status" value="1"/>
</dbReference>
<dbReference type="SUPFAM" id="SSF46609">
    <property type="entry name" value="Fe,Mn superoxide dismutase (SOD), N-terminal domain"/>
    <property type="match status" value="1"/>
</dbReference>
<feature type="chain" id="PRO_0000316038" description="Small ribosomal subunit protein mS42">
    <location>
        <begin position="1"/>
        <end position="220"/>
    </location>
</feature>
<name>RT26_SCHPO</name>